<evidence type="ECO:0000256" key="1">
    <source>
        <dbReference type="SAM" id="MobiDB-lite"/>
    </source>
</evidence>
<evidence type="ECO:0000269" key="2">
    <source>
    </source>
</evidence>
<evidence type="ECO:0000305" key="3"/>
<dbReference type="EMBL" id="AL123456">
    <property type="protein sequence ID" value="CCP44146.1"/>
    <property type="molecule type" value="Genomic_DNA"/>
</dbReference>
<dbReference type="PIR" id="A70899">
    <property type="entry name" value="A70899"/>
</dbReference>
<dbReference type="RefSeq" id="WP_003407230.1">
    <property type="nucleotide sequence ID" value="NZ_NVQJ01000050.1"/>
</dbReference>
<dbReference type="RefSeq" id="YP_177806.1">
    <property type="nucleotide sequence ID" value="NC_000962.3"/>
</dbReference>
<dbReference type="SMR" id="P9WI23"/>
<dbReference type="STRING" id="83332.Rv1387"/>
<dbReference type="PaxDb" id="83332-Rv1387"/>
<dbReference type="GeneID" id="886784"/>
<dbReference type="KEGG" id="mtu:Rv1387"/>
<dbReference type="KEGG" id="mtv:RVBD_1387"/>
<dbReference type="TubercuList" id="Rv1387"/>
<dbReference type="eggNOG" id="COG5651">
    <property type="taxonomic scope" value="Bacteria"/>
</dbReference>
<dbReference type="InParanoid" id="P9WI23"/>
<dbReference type="OrthoDB" id="4753487at2"/>
<dbReference type="PhylomeDB" id="P9WI23"/>
<dbReference type="Proteomes" id="UP000001584">
    <property type="component" value="Chromosome"/>
</dbReference>
<dbReference type="GO" id="GO:0005576">
    <property type="term" value="C:extracellular region"/>
    <property type="evidence" value="ECO:0007669"/>
    <property type="project" value="UniProtKB-SubCell"/>
</dbReference>
<dbReference type="GO" id="GO:0052572">
    <property type="term" value="P:response to host immune response"/>
    <property type="evidence" value="ECO:0000318"/>
    <property type="project" value="GO_Central"/>
</dbReference>
<dbReference type="Gene3D" id="1.20.1260.20">
    <property type="entry name" value="PPE superfamily"/>
    <property type="match status" value="1"/>
</dbReference>
<dbReference type="InterPro" id="IPR043641">
    <property type="entry name" value="PPE-PPW_C"/>
</dbReference>
<dbReference type="InterPro" id="IPR000030">
    <property type="entry name" value="PPE_dom"/>
</dbReference>
<dbReference type="InterPro" id="IPR038332">
    <property type="entry name" value="PPE_sf"/>
</dbReference>
<dbReference type="PANTHER" id="PTHR46766">
    <property type="entry name" value="GLUTAMINE-RICH PROTEIN 2"/>
    <property type="match status" value="1"/>
</dbReference>
<dbReference type="PANTHER" id="PTHR46766:SF1">
    <property type="entry name" value="GLUTAMINE-RICH PROTEIN 2"/>
    <property type="match status" value="1"/>
</dbReference>
<dbReference type="Pfam" id="PF00823">
    <property type="entry name" value="PPE"/>
    <property type="match status" value="1"/>
</dbReference>
<dbReference type="Pfam" id="PF18878">
    <property type="entry name" value="PPE-PPW"/>
    <property type="match status" value="1"/>
</dbReference>
<dbReference type="SUPFAM" id="SSF140459">
    <property type="entry name" value="PE/PPE dimer-like"/>
    <property type="match status" value="1"/>
</dbReference>
<sequence length="539" mass="55404">MTEPWIAFPPEVHSAMLNYGAGVGPMLISATQNGELSAQYAEAASEVEELLGVVASEGWQGQAAEAFVAAYMPFLAWLIQASADCVEMAAQQHVVIEAYTAAVELMPTQVELAANQIKLAVLVATNFFGINTIPIAINEAEYVEMWVRAATTMATYSTVSRSALSAMPHTSPPPLILKSDELLPDTGEDSDEDGHNHGGHSHGGHARMIDNFFAEILRGVSAGRIVWDPVNGTLNGLDYDDYVYPGHAIWWLARGLEFFQDGEQFGELLFTNPTGAFQFLLYVVVVDLPTHIAQIATWLGQYPQLLSAALTGVIAHLGAITGLAGLSGLSAIPSAAIPAVVPELTPVAAAPPMLAVAGVGPAVAAPGMLPASAPAPAAAAGATAAGPTPPATGFGGFPPYLVGGGGPGIGFGSGQSAHAKAAASDSAAAESAAQASARAQARAARRGRSAAKARGHRDEFVTMDMGFDAAAPAPEHQPGARASDCGAGPIGFAGTVRKEAVVKAAGLTTLAGDDFGGGPTMPMMPGTWTHDQGVFDEHR</sequence>
<keyword id="KW-1185">Reference proteome</keyword>
<keyword id="KW-0964">Secreted</keyword>
<name>PPE20_MYCTU</name>
<comment type="subcellular location">
    <subcellularLocation>
        <location evidence="2">Secreted</location>
    </subcellularLocation>
    <text evidence="2">Secreted via the ESX-3 / type VII secretion system (T7SS) (PubMed:26729876). Secretion is dependent on EsxG and EsxH (PubMed:26729876).</text>
</comment>
<comment type="similarity">
    <text evidence="3">Belongs to the mycobacterial PPE family.</text>
</comment>
<accession>P9WI23</accession>
<accession>L0T6I0</accession>
<accession>Q79FP7</accession>
<accession>Q7D8H6</accession>
<proteinExistence type="evidence at protein level"/>
<feature type="chain" id="PRO_0000379110" description="Uncharacterized PPE family protein PPE20">
    <location>
        <begin position="1"/>
        <end position="539"/>
    </location>
</feature>
<feature type="region of interest" description="Disordered" evidence="1">
    <location>
        <begin position="179"/>
        <end position="203"/>
    </location>
</feature>
<feature type="region of interest" description="Disordered" evidence="1">
    <location>
        <begin position="433"/>
        <end position="459"/>
    </location>
</feature>
<feature type="compositionally biased region" description="Acidic residues" evidence="1">
    <location>
        <begin position="182"/>
        <end position="192"/>
    </location>
</feature>
<feature type="compositionally biased region" description="Low complexity" evidence="1">
    <location>
        <begin position="433"/>
        <end position="442"/>
    </location>
</feature>
<feature type="compositionally biased region" description="Basic residues" evidence="1">
    <location>
        <begin position="443"/>
        <end position="455"/>
    </location>
</feature>
<organism>
    <name type="scientific">Mycobacterium tuberculosis (strain ATCC 25618 / H37Rv)</name>
    <dbReference type="NCBI Taxonomy" id="83332"/>
    <lineage>
        <taxon>Bacteria</taxon>
        <taxon>Bacillati</taxon>
        <taxon>Actinomycetota</taxon>
        <taxon>Actinomycetes</taxon>
        <taxon>Mycobacteriales</taxon>
        <taxon>Mycobacteriaceae</taxon>
        <taxon>Mycobacterium</taxon>
        <taxon>Mycobacterium tuberculosis complex</taxon>
    </lineage>
</organism>
<gene>
    <name type="primary">PPE20</name>
    <name type="ordered locus">Rv1387</name>
</gene>
<protein>
    <recommendedName>
        <fullName evidence="3">Uncharacterized PPE family protein PPE20</fullName>
    </recommendedName>
</protein>
<reference key="1">
    <citation type="journal article" date="1998" name="Nature">
        <title>Deciphering the biology of Mycobacterium tuberculosis from the complete genome sequence.</title>
        <authorList>
            <person name="Cole S.T."/>
            <person name="Brosch R."/>
            <person name="Parkhill J."/>
            <person name="Garnier T."/>
            <person name="Churcher C.M."/>
            <person name="Harris D.E."/>
            <person name="Gordon S.V."/>
            <person name="Eiglmeier K."/>
            <person name="Gas S."/>
            <person name="Barry C.E. III"/>
            <person name="Tekaia F."/>
            <person name="Badcock K."/>
            <person name="Basham D."/>
            <person name="Brown D."/>
            <person name="Chillingworth T."/>
            <person name="Connor R."/>
            <person name="Davies R.M."/>
            <person name="Devlin K."/>
            <person name="Feltwell T."/>
            <person name="Gentles S."/>
            <person name="Hamlin N."/>
            <person name="Holroyd S."/>
            <person name="Hornsby T."/>
            <person name="Jagels K."/>
            <person name="Krogh A."/>
            <person name="McLean J."/>
            <person name="Moule S."/>
            <person name="Murphy L.D."/>
            <person name="Oliver S."/>
            <person name="Osborne J."/>
            <person name="Quail M.A."/>
            <person name="Rajandream M.A."/>
            <person name="Rogers J."/>
            <person name="Rutter S."/>
            <person name="Seeger K."/>
            <person name="Skelton S."/>
            <person name="Squares S."/>
            <person name="Squares R."/>
            <person name="Sulston J.E."/>
            <person name="Taylor K."/>
            <person name="Whitehead S."/>
            <person name="Barrell B.G."/>
        </authorList>
    </citation>
    <scope>NUCLEOTIDE SEQUENCE [LARGE SCALE GENOMIC DNA]</scope>
    <source>
        <strain>ATCC 25618 / H37Rv</strain>
    </source>
</reference>
<reference key="2">
    <citation type="journal article" date="2011" name="Mol. Cell. Proteomics">
        <title>Proteogenomic analysis of Mycobacterium tuberculosis by high resolution mass spectrometry.</title>
        <authorList>
            <person name="Kelkar D.S."/>
            <person name="Kumar D."/>
            <person name="Kumar P."/>
            <person name="Balakrishnan L."/>
            <person name="Muthusamy B."/>
            <person name="Yadav A.K."/>
            <person name="Shrivastava P."/>
            <person name="Marimuthu A."/>
            <person name="Anand S."/>
            <person name="Sundaram H."/>
            <person name="Kingsbury R."/>
            <person name="Harsha H.C."/>
            <person name="Nair B."/>
            <person name="Prasad T.S."/>
            <person name="Chauhan D.S."/>
            <person name="Katoch K."/>
            <person name="Katoch V.M."/>
            <person name="Kumar P."/>
            <person name="Chaerkady R."/>
            <person name="Ramachandran S."/>
            <person name="Dash D."/>
            <person name="Pandey A."/>
        </authorList>
    </citation>
    <scope>IDENTIFICATION BY MASS SPECTROMETRY [LARGE SCALE ANALYSIS]</scope>
    <source>
        <strain>ATCC 25618 / H37Rv</strain>
    </source>
</reference>
<reference key="3">
    <citation type="journal article" date="2016" name="Proc. Natl. Acad. Sci. U.S.A.">
        <title>Separable roles for Mycobacterium tuberculosis ESX-3 effectors in iron acquisition and virulence.</title>
        <authorList>
            <person name="Tufariello J.M."/>
            <person name="Chapman J.R."/>
            <person name="Kerantzas C.A."/>
            <person name="Wong K.W."/>
            <person name="Vilcheze C."/>
            <person name="Jones C.M."/>
            <person name="Cole L.E."/>
            <person name="Tinaztepe E."/>
            <person name="Thompson V."/>
            <person name="Fenyoe D."/>
            <person name="Niederweis M."/>
            <person name="Ueberheide B."/>
            <person name="Philips J.A."/>
            <person name="Jacobs W.R. Jr."/>
        </authorList>
    </citation>
    <scope>SUBCELLULAR LOCATION</scope>
</reference>